<dbReference type="EMBL" id="AAFI02000092">
    <property type="protein sequence ID" value="EAL63966.1"/>
    <property type="molecule type" value="Genomic_DNA"/>
</dbReference>
<dbReference type="RefSeq" id="XP_637475.1">
    <property type="nucleotide sequence ID" value="XM_632383.1"/>
</dbReference>
<dbReference type="PaxDb" id="44689-DDB0187200"/>
<dbReference type="EnsemblProtists" id="EAL63966">
    <property type="protein sequence ID" value="EAL63966"/>
    <property type="gene ID" value="DDB_G0286937"/>
</dbReference>
<dbReference type="GeneID" id="8625874"/>
<dbReference type="KEGG" id="ddi:DDB_G0286937"/>
<dbReference type="dictyBase" id="DDB_G0286937"/>
<dbReference type="VEuPathDB" id="AmoebaDB:DDB_G0286937"/>
<dbReference type="HOGENOM" id="CLU_3280647_0_0_1"/>
<dbReference type="InParanoid" id="Q54L28"/>
<dbReference type="Proteomes" id="UP000002195">
    <property type="component" value="Chromosome 4"/>
</dbReference>
<gene>
    <name type="ORF">DDB_G0286937</name>
</gene>
<sequence>MPNSYFPSSVTSLHFIDCSVLELNQIHSNITILSLPNEFNH</sequence>
<protein>
    <recommendedName>
        <fullName>Putative uncharacterized protein DDB_G0286937</fullName>
    </recommendedName>
</protein>
<keyword id="KW-1185">Reference proteome</keyword>
<evidence type="ECO:0000305" key="1"/>
<name>Y7200_DICDI</name>
<feature type="chain" id="PRO_0000347046" description="Putative uncharacterized protein DDB_G0286937">
    <location>
        <begin position="1"/>
        <end position="41"/>
    </location>
</feature>
<accession>Q54L28</accession>
<comment type="caution">
    <text evidence="1">Product of a dubious gene prediction.</text>
</comment>
<reference key="1">
    <citation type="journal article" date="2005" name="Nature">
        <title>The genome of the social amoeba Dictyostelium discoideum.</title>
        <authorList>
            <person name="Eichinger L."/>
            <person name="Pachebat J.A."/>
            <person name="Gloeckner G."/>
            <person name="Rajandream M.A."/>
            <person name="Sucgang R."/>
            <person name="Berriman M."/>
            <person name="Song J."/>
            <person name="Olsen R."/>
            <person name="Szafranski K."/>
            <person name="Xu Q."/>
            <person name="Tunggal B."/>
            <person name="Kummerfeld S."/>
            <person name="Madera M."/>
            <person name="Konfortov B.A."/>
            <person name="Rivero F."/>
            <person name="Bankier A.T."/>
            <person name="Lehmann R."/>
            <person name="Hamlin N."/>
            <person name="Davies R."/>
            <person name="Gaudet P."/>
            <person name="Fey P."/>
            <person name="Pilcher K."/>
            <person name="Chen G."/>
            <person name="Saunders D."/>
            <person name="Sodergren E.J."/>
            <person name="Davis P."/>
            <person name="Kerhornou A."/>
            <person name="Nie X."/>
            <person name="Hall N."/>
            <person name="Anjard C."/>
            <person name="Hemphill L."/>
            <person name="Bason N."/>
            <person name="Farbrother P."/>
            <person name="Desany B."/>
            <person name="Just E."/>
            <person name="Morio T."/>
            <person name="Rost R."/>
            <person name="Churcher C.M."/>
            <person name="Cooper J."/>
            <person name="Haydock S."/>
            <person name="van Driessche N."/>
            <person name="Cronin A."/>
            <person name="Goodhead I."/>
            <person name="Muzny D.M."/>
            <person name="Mourier T."/>
            <person name="Pain A."/>
            <person name="Lu M."/>
            <person name="Harper D."/>
            <person name="Lindsay R."/>
            <person name="Hauser H."/>
            <person name="James K.D."/>
            <person name="Quiles M."/>
            <person name="Madan Babu M."/>
            <person name="Saito T."/>
            <person name="Buchrieser C."/>
            <person name="Wardroper A."/>
            <person name="Felder M."/>
            <person name="Thangavelu M."/>
            <person name="Johnson D."/>
            <person name="Knights A."/>
            <person name="Loulseged H."/>
            <person name="Mungall K.L."/>
            <person name="Oliver K."/>
            <person name="Price C."/>
            <person name="Quail M.A."/>
            <person name="Urushihara H."/>
            <person name="Hernandez J."/>
            <person name="Rabbinowitsch E."/>
            <person name="Steffen D."/>
            <person name="Sanders M."/>
            <person name="Ma J."/>
            <person name="Kohara Y."/>
            <person name="Sharp S."/>
            <person name="Simmonds M.N."/>
            <person name="Spiegler S."/>
            <person name="Tivey A."/>
            <person name="Sugano S."/>
            <person name="White B."/>
            <person name="Walker D."/>
            <person name="Woodward J.R."/>
            <person name="Winckler T."/>
            <person name="Tanaka Y."/>
            <person name="Shaulsky G."/>
            <person name="Schleicher M."/>
            <person name="Weinstock G.M."/>
            <person name="Rosenthal A."/>
            <person name="Cox E.C."/>
            <person name="Chisholm R.L."/>
            <person name="Gibbs R.A."/>
            <person name="Loomis W.F."/>
            <person name="Platzer M."/>
            <person name="Kay R.R."/>
            <person name="Williams J.G."/>
            <person name="Dear P.H."/>
            <person name="Noegel A.A."/>
            <person name="Barrell B.G."/>
            <person name="Kuspa A."/>
        </authorList>
    </citation>
    <scope>NUCLEOTIDE SEQUENCE [LARGE SCALE GENOMIC DNA]</scope>
    <source>
        <strain>AX4</strain>
    </source>
</reference>
<proteinExistence type="uncertain"/>
<organism>
    <name type="scientific">Dictyostelium discoideum</name>
    <name type="common">Social amoeba</name>
    <dbReference type="NCBI Taxonomy" id="44689"/>
    <lineage>
        <taxon>Eukaryota</taxon>
        <taxon>Amoebozoa</taxon>
        <taxon>Evosea</taxon>
        <taxon>Eumycetozoa</taxon>
        <taxon>Dictyostelia</taxon>
        <taxon>Dictyosteliales</taxon>
        <taxon>Dictyosteliaceae</taxon>
        <taxon>Dictyostelium</taxon>
    </lineage>
</organism>